<comment type="function">
    <text>May have a molecular chaperone role in the processing of secreted materials.</text>
</comment>
<comment type="subcellular location">
    <subcellularLocation>
        <location>Endoplasmic reticulum lumen</location>
    </subcellularLocation>
</comment>
<comment type="tissue specificity">
    <text>Not detected in extracts from young plants unless they are exposed to heat shock for several hours. Found to be constitutively expressed in cell cultures.</text>
</comment>
<comment type="similarity">
    <text evidence="4">Belongs to the heat shock protein 90 family.</text>
</comment>
<organism>
    <name type="scientific">Catharanthus roseus</name>
    <name type="common">Madagascar periwinkle</name>
    <name type="synonym">Vinca rosea</name>
    <dbReference type="NCBI Taxonomy" id="4058"/>
    <lineage>
        <taxon>Eukaryota</taxon>
        <taxon>Viridiplantae</taxon>
        <taxon>Streptophyta</taxon>
        <taxon>Embryophyta</taxon>
        <taxon>Tracheophyta</taxon>
        <taxon>Spermatophyta</taxon>
        <taxon>Magnoliopsida</taxon>
        <taxon>eudicotyledons</taxon>
        <taxon>Gunneridae</taxon>
        <taxon>Pentapetalae</taxon>
        <taxon>asterids</taxon>
        <taxon>lamiids</taxon>
        <taxon>Gentianales</taxon>
        <taxon>Apocynaceae</taxon>
        <taxon>Rauvolfioideae</taxon>
        <taxon>Vinceae</taxon>
        <taxon>Catharanthinae</taxon>
        <taxon>Catharanthus</taxon>
    </lineage>
</organism>
<accession>P35016</accession>
<evidence type="ECO:0000250" key="1">
    <source>
        <dbReference type="UniProtKB" id="P41148"/>
    </source>
</evidence>
<evidence type="ECO:0000255" key="2"/>
<evidence type="ECO:0000256" key="3">
    <source>
        <dbReference type="SAM" id="MobiDB-lite"/>
    </source>
</evidence>
<evidence type="ECO:0000305" key="4"/>
<gene>
    <name type="primary">HSP90</name>
</gene>
<keyword id="KW-0067">ATP-binding</keyword>
<keyword id="KW-0106">Calcium</keyword>
<keyword id="KW-0143">Chaperone</keyword>
<keyword id="KW-0256">Endoplasmic reticulum</keyword>
<keyword id="KW-0325">Glycoprotein</keyword>
<keyword id="KW-0547">Nucleotide-binding</keyword>
<keyword id="KW-0732">Signal</keyword>
<proteinExistence type="evidence at transcript level"/>
<dbReference type="EMBL" id="L14594">
    <property type="protein sequence ID" value="AAA16785.1"/>
    <property type="molecule type" value="mRNA"/>
</dbReference>
<dbReference type="PIR" id="S39558">
    <property type="entry name" value="S39558"/>
</dbReference>
<dbReference type="SMR" id="P35016"/>
<dbReference type="GlyCosmos" id="P35016">
    <property type="glycosylation" value="5 sites, No reported glycans"/>
</dbReference>
<dbReference type="GO" id="GO:0005788">
    <property type="term" value="C:endoplasmic reticulum lumen"/>
    <property type="evidence" value="ECO:0007669"/>
    <property type="project" value="UniProtKB-SubCell"/>
</dbReference>
<dbReference type="GO" id="GO:0005524">
    <property type="term" value="F:ATP binding"/>
    <property type="evidence" value="ECO:0007669"/>
    <property type="project" value="UniProtKB-KW"/>
</dbReference>
<dbReference type="GO" id="GO:0016887">
    <property type="term" value="F:ATP hydrolysis activity"/>
    <property type="evidence" value="ECO:0007669"/>
    <property type="project" value="InterPro"/>
</dbReference>
<dbReference type="GO" id="GO:0140662">
    <property type="term" value="F:ATP-dependent protein folding chaperone"/>
    <property type="evidence" value="ECO:0007669"/>
    <property type="project" value="InterPro"/>
</dbReference>
<dbReference type="GO" id="GO:0051082">
    <property type="term" value="F:unfolded protein binding"/>
    <property type="evidence" value="ECO:0007669"/>
    <property type="project" value="InterPro"/>
</dbReference>
<dbReference type="CDD" id="cd16927">
    <property type="entry name" value="HATPase_Hsp90-like"/>
    <property type="match status" value="1"/>
</dbReference>
<dbReference type="FunFam" id="3.30.230.80:FF:000006">
    <property type="entry name" value="endoplasmin homolog"/>
    <property type="match status" value="1"/>
</dbReference>
<dbReference type="FunFam" id="3.40.50.11260:FF:000006">
    <property type="entry name" value="endoplasmin homolog"/>
    <property type="match status" value="1"/>
</dbReference>
<dbReference type="FunFam" id="1.20.120.790:FF:000005">
    <property type="entry name" value="Endoplasmin-like isoform B"/>
    <property type="match status" value="1"/>
</dbReference>
<dbReference type="FunFam" id="3.30.565.10:FF:000005">
    <property type="entry name" value="Heat shock protein 90"/>
    <property type="match status" value="1"/>
</dbReference>
<dbReference type="Gene3D" id="3.30.230.80">
    <property type="match status" value="1"/>
</dbReference>
<dbReference type="Gene3D" id="3.40.50.11260">
    <property type="match status" value="1"/>
</dbReference>
<dbReference type="Gene3D" id="1.20.120.790">
    <property type="entry name" value="Heat shock protein 90, C-terminal domain"/>
    <property type="match status" value="1"/>
</dbReference>
<dbReference type="Gene3D" id="3.30.565.10">
    <property type="entry name" value="Histidine kinase-like ATPase, C-terminal domain"/>
    <property type="match status" value="1"/>
</dbReference>
<dbReference type="HAMAP" id="MF_00505">
    <property type="entry name" value="HSP90"/>
    <property type="match status" value="1"/>
</dbReference>
<dbReference type="InterPro" id="IPR036890">
    <property type="entry name" value="HATPase_C_sf"/>
</dbReference>
<dbReference type="InterPro" id="IPR019805">
    <property type="entry name" value="Heat_shock_protein_90_CS"/>
</dbReference>
<dbReference type="InterPro" id="IPR037196">
    <property type="entry name" value="HSP90_C"/>
</dbReference>
<dbReference type="InterPro" id="IPR001404">
    <property type="entry name" value="Hsp90_fam"/>
</dbReference>
<dbReference type="InterPro" id="IPR020575">
    <property type="entry name" value="Hsp90_N"/>
</dbReference>
<dbReference type="InterPro" id="IPR020568">
    <property type="entry name" value="Ribosomal_Su5_D2-typ_SF"/>
</dbReference>
<dbReference type="NCBIfam" id="NF003555">
    <property type="entry name" value="PRK05218.1"/>
    <property type="match status" value="1"/>
</dbReference>
<dbReference type="PANTHER" id="PTHR11528">
    <property type="entry name" value="HEAT SHOCK PROTEIN 90 FAMILY MEMBER"/>
    <property type="match status" value="1"/>
</dbReference>
<dbReference type="Pfam" id="PF13589">
    <property type="entry name" value="HATPase_c_3"/>
    <property type="match status" value="1"/>
</dbReference>
<dbReference type="Pfam" id="PF00183">
    <property type="entry name" value="HSP90"/>
    <property type="match status" value="1"/>
</dbReference>
<dbReference type="PIRSF" id="PIRSF002583">
    <property type="entry name" value="Hsp90"/>
    <property type="match status" value="1"/>
</dbReference>
<dbReference type="PRINTS" id="PR00775">
    <property type="entry name" value="HEATSHOCK90"/>
</dbReference>
<dbReference type="SMART" id="SM00387">
    <property type="entry name" value="HATPase_c"/>
    <property type="match status" value="1"/>
</dbReference>
<dbReference type="SUPFAM" id="SSF55874">
    <property type="entry name" value="ATPase domain of HSP90 chaperone/DNA topoisomerase II/histidine kinase"/>
    <property type="match status" value="1"/>
</dbReference>
<dbReference type="SUPFAM" id="SSF110942">
    <property type="entry name" value="HSP90 C-terminal domain"/>
    <property type="match status" value="1"/>
</dbReference>
<dbReference type="SUPFAM" id="SSF54211">
    <property type="entry name" value="Ribosomal protein S5 domain 2-like"/>
    <property type="match status" value="1"/>
</dbReference>
<dbReference type="PROSITE" id="PS00014">
    <property type="entry name" value="ER_TARGET"/>
    <property type="match status" value="1"/>
</dbReference>
<dbReference type="PROSITE" id="PS00298">
    <property type="entry name" value="HSP90"/>
    <property type="match status" value="1"/>
</dbReference>
<feature type="signal peptide" evidence="2">
    <location>
        <begin position="1"/>
        <end position="20"/>
    </location>
</feature>
<feature type="chain" id="PRO_0000013602" description="Endoplasmin homolog">
    <location>
        <begin position="21"/>
        <end position="817"/>
    </location>
</feature>
<feature type="region of interest" description="Disordered" evidence="3">
    <location>
        <begin position="31"/>
        <end position="58"/>
    </location>
</feature>
<feature type="region of interest" description="Disordered" evidence="3">
    <location>
        <begin position="293"/>
        <end position="333"/>
    </location>
</feature>
<feature type="region of interest" description="Disordered" evidence="3">
    <location>
        <begin position="777"/>
        <end position="817"/>
    </location>
</feature>
<feature type="short sequence motif" description="Prevents secretion from ER">
    <location>
        <begin position="814"/>
        <end position="817"/>
    </location>
</feature>
<feature type="compositionally biased region" description="Acidic residues" evidence="3">
    <location>
        <begin position="293"/>
        <end position="325"/>
    </location>
</feature>
<feature type="compositionally biased region" description="Acidic residues" evidence="3">
    <location>
        <begin position="781"/>
        <end position="793"/>
    </location>
</feature>
<feature type="compositionally biased region" description="Low complexity" evidence="3">
    <location>
        <begin position="794"/>
        <end position="805"/>
    </location>
</feature>
<feature type="binding site" evidence="1">
    <location>
        <position position="111"/>
    </location>
    <ligand>
        <name>ATP</name>
        <dbReference type="ChEBI" id="CHEBI:30616"/>
    </ligand>
</feature>
<feature type="binding site" evidence="1">
    <location>
        <position position="155"/>
    </location>
    <ligand>
        <name>ATP</name>
        <dbReference type="ChEBI" id="CHEBI:30616"/>
    </ligand>
</feature>
<feature type="binding site" evidence="1">
    <location>
        <position position="168"/>
    </location>
    <ligand>
        <name>ATP</name>
        <dbReference type="ChEBI" id="CHEBI:30616"/>
    </ligand>
</feature>
<feature type="binding site" evidence="1">
    <location>
        <position position="200"/>
    </location>
    <ligand>
        <name>ATP</name>
        <dbReference type="ChEBI" id="CHEBI:30616"/>
    </ligand>
</feature>
<feature type="site" description="Important for ATP hydrolysis" evidence="1">
    <location>
        <position position="459"/>
    </location>
</feature>
<feature type="glycosylation site" description="N-linked (GlcNAc...) asparagine" evidence="2">
    <location>
        <position position="111"/>
    </location>
</feature>
<feature type="glycosylation site" description="N-linked (GlcNAc...) asparagine" evidence="2">
    <location>
        <position position="306"/>
    </location>
</feature>
<feature type="glycosylation site" description="N-linked (GlcNAc...) asparagine" evidence="2">
    <location>
        <position position="416"/>
    </location>
</feature>
<feature type="glycosylation site" description="N-linked (GlcNAc...) asparagine" evidence="2">
    <location>
        <position position="456"/>
    </location>
</feature>
<feature type="glycosylation site" description="N-linked (GlcNAc...) asparagine" evidence="2">
    <location>
        <position position="624"/>
    </location>
</feature>
<name>ENPL_CATRO</name>
<protein>
    <recommendedName>
        <fullName>Endoplasmin homolog</fullName>
    </recommendedName>
    <alternativeName>
        <fullName>Glucose-regulated protein 94 homolog</fullName>
        <shortName>GRP-94 homolog</shortName>
    </alternativeName>
</protein>
<reference key="1">
    <citation type="journal article" date="1993" name="Plant Mol. Biol.">
        <title>HSP90 homologue from Madagascar periwinkle (Catharanthus roseus): cDNA sequence, regulation of protein expression and location in the endoplasmic reticulum.</title>
        <authorList>
            <person name="Schroeder G."/>
            <person name="Beck M."/>
            <person name="Eichel J."/>
            <person name="Vetter H.P."/>
            <person name="Schroeder J."/>
        </authorList>
    </citation>
    <scope>NUCLEOTIDE SEQUENCE [MRNA]</scope>
    <source>
        <strain>cv. CP3A</strain>
    </source>
</reference>
<sequence length="817" mass="93492">MRKWTVPSVLFLLCPSLSSSCQGRKIHANAEADSDAPVDPPKVEDKIGAVPNGLSTDSDVAKREAESMSMRNLRSDAEKFEFQAEVSRLMDIIINSLYSNKDIFLRELISNASDALDKIRFLALTDKEILGEGDTAKLEIQIKLDKEKKILSIRDRGIGMTKEDLIKNLGTIAKSGTSAFVEKMQTSGDLNLIGQFGVGFYSVYLVPDYVEVISKHNDDKQYIWESKADGAFAISEDVWNEPLGRGTEIRLHLRDEAQEYLDEFKLKELVKRYSEFINFPIYLWASKEVEVEVPAEEDDSSDDEDNKSESSSSEEGEEEETEKEEDEKKPKTKKVKETTYEWELLNDMKAIWLRNPKDVTDDEYTKFYHSLAKDFSEEKPLAWSHFTAEGDVEFKAFTLLPPKAPQDLYESYYNSNKSNLKLYVRRVFISDEFDELLPKYLNFLKGLVDSDTLPLNVSREMLQQHSSLKTIKKKLIRKALDMIRKIADEDPDEANDKDKKEVEESTDNDEKKGQYAKFWNEFGKSIKLGIIEDAANRNRLAKLLRFESTKSEGKLTSLDQYISRMKSGQKDIFYITGTSKEQLEKSPFLERLTKKNYEVILFTDPVDEYLMQYLMDYEDKKFQNVSKEGLKIGKDSKDKELKESFKELTKWWKGALASENVDDVKISNRLANTPCVVVTSKYGWSSNMERIMQSQTLSDASKQAYMRGKRVLEINPRHPIIKELRERVVKDAEDESVKQTARLMYQTALMESGFMLNDPKEFASSIYDSVKSSLKISPDATVEEEDDTEEAEAESGTTESSAAEDAGAETLDLKDEL</sequence>